<proteinExistence type="inferred from homology"/>
<comment type="similarity">
    <text evidence="1">Belongs to the bacterial ribosomal protein bL35 family.</text>
</comment>
<protein>
    <recommendedName>
        <fullName evidence="1">Large ribosomal subunit protein bL35</fullName>
    </recommendedName>
    <alternativeName>
        <fullName evidence="3">50S ribosomal protein L35</fullName>
    </alternativeName>
</protein>
<keyword id="KW-1185">Reference proteome</keyword>
<keyword id="KW-0687">Ribonucleoprotein</keyword>
<keyword id="KW-0689">Ribosomal protein</keyword>
<reference key="1">
    <citation type="submission" date="2008-04" db="EMBL/GenBank/DDBJ databases">
        <title>Complete sequence of chromosome of Natranaerobius thermophilus JW/NM-WN-LF.</title>
        <authorList>
            <consortium name="US DOE Joint Genome Institute"/>
            <person name="Copeland A."/>
            <person name="Lucas S."/>
            <person name="Lapidus A."/>
            <person name="Glavina del Rio T."/>
            <person name="Dalin E."/>
            <person name="Tice H."/>
            <person name="Bruce D."/>
            <person name="Goodwin L."/>
            <person name="Pitluck S."/>
            <person name="Chertkov O."/>
            <person name="Brettin T."/>
            <person name="Detter J.C."/>
            <person name="Han C."/>
            <person name="Kuske C.R."/>
            <person name="Schmutz J."/>
            <person name="Larimer F."/>
            <person name="Land M."/>
            <person name="Hauser L."/>
            <person name="Kyrpides N."/>
            <person name="Lykidis A."/>
            <person name="Mesbah N.M."/>
            <person name="Wiegel J."/>
        </authorList>
    </citation>
    <scope>NUCLEOTIDE SEQUENCE [LARGE SCALE GENOMIC DNA]</scope>
    <source>
        <strain>ATCC BAA-1301 / DSM 18059 / JW/NM-WN-LF</strain>
    </source>
</reference>
<sequence length="64" mass="7607">MPKMKTHKGAAKRFKKTGKGKIKRRKAFKSHILTKKTPKRKRNLRKPTVMKNKAEEKRIKRLLP</sequence>
<gene>
    <name evidence="1" type="primary">rpmI</name>
    <name type="ordered locus">Nther_1822</name>
</gene>
<evidence type="ECO:0000255" key="1">
    <source>
        <dbReference type="HAMAP-Rule" id="MF_00514"/>
    </source>
</evidence>
<evidence type="ECO:0000256" key="2">
    <source>
        <dbReference type="SAM" id="MobiDB-lite"/>
    </source>
</evidence>
<evidence type="ECO:0000305" key="3"/>
<accession>B2A5P0</accession>
<dbReference type="EMBL" id="CP001034">
    <property type="protein sequence ID" value="ACB85394.1"/>
    <property type="molecule type" value="Genomic_DNA"/>
</dbReference>
<dbReference type="RefSeq" id="WP_012448260.1">
    <property type="nucleotide sequence ID" value="NC_010718.1"/>
</dbReference>
<dbReference type="SMR" id="B2A5P0"/>
<dbReference type="FunCoup" id="B2A5P0">
    <property type="interactions" value="320"/>
</dbReference>
<dbReference type="STRING" id="457570.Nther_1822"/>
<dbReference type="KEGG" id="nth:Nther_1822"/>
<dbReference type="eggNOG" id="COG0291">
    <property type="taxonomic scope" value="Bacteria"/>
</dbReference>
<dbReference type="HOGENOM" id="CLU_169643_4_3_9"/>
<dbReference type="InParanoid" id="B2A5P0"/>
<dbReference type="OrthoDB" id="47476at2"/>
<dbReference type="Proteomes" id="UP000001683">
    <property type="component" value="Chromosome"/>
</dbReference>
<dbReference type="GO" id="GO:0015934">
    <property type="term" value="C:large ribosomal subunit"/>
    <property type="evidence" value="ECO:0007669"/>
    <property type="project" value="TreeGrafter"/>
</dbReference>
<dbReference type="GO" id="GO:0003735">
    <property type="term" value="F:structural constituent of ribosome"/>
    <property type="evidence" value="ECO:0007669"/>
    <property type="project" value="InterPro"/>
</dbReference>
<dbReference type="GO" id="GO:0006412">
    <property type="term" value="P:translation"/>
    <property type="evidence" value="ECO:0007669"/>
    <property type="project" value="UniProtKB-UniRule"/>
</dbReference>
<dbReference type="FunFam" id="4.10.410.60:FF:000001">
    <property type="entry name" value="50S ribosomal protein L35"/>
    <property type="match status" value="1"/>
</dbReference>
<dbReference type="Gene3D" id="4.10.410.60">
    <property type="match status" value="1"/>
</dbReference>
<dbReference type="HAMAP" id="MF_00514">
    <property type="entry name" value="Ribosomal_bL35"/>
    <property type="match status" value="1"/>
</dbReference>
<dbReference type="InterPro" id="IPR001706">
    <property type="entry name" value="Ribosomal_bL35"/>
</dbReference>
<dbReference type="InterPro" id="IPR021137">
    <property type="entry name" value="Ribosomal_bL35-like"/>
</dbReference>
<dbReference type="InterPro" id="IPR018265">
    <property type="entry name" value="Ribosomal_bL35_CS"/>
</dbReference>
<dbReference type="InterPro" id="IPR037229">
    <property type="entry name" value="Ribosomal_bL35_sf"/>
</dbReference>
<dbReference type="NCBIfam" id="TIGR00001">
    <property type="entry name" value="rpmI_bact"/>
    <property type="match status" value="1"/>
</dbReference>
<dbReference type="PANTHER" id="PTHR33343">
    <property type="entry name" value="54S RIBOSOMAL PROTEIN BL35M"/>
    <property type="match status" value="1"/>
</dbReference>
<dbReference type="PANTHER" id="PTHR33343:SF1">
    <property type="entry name" value="LARGE RIBOSOMAL SUBUNIT PROTEIN BL35M"/>
    <property type="match status" value="1"/>
</dbReference>
<dbReference type="Pfam" id="PF01632">
    <property type="entry name" value="Ribosomal_L35p"/>
    <property type="match status" value="1"/>
</dbReference>
<dbReference type="PRINTS" id="PR00064">
    <property type="entry name" value="RIBOSOMALL35"/>
</dbReference>
<dbReference type="SUPFAM" id="SSF143034">
    <property type="entry name" value="L35p-like"/>
    <property type="match status" value="1"/>
</dbReference>
<dbReference type="PROSITE" id="PS00936">
    <property type="entry name" value="RIBOSOMAL_L35"/>
    <property type="match status" value="1"/>
</dbReference>
<name>RL35_NATTJ</name>
<feature type="chain" id="PRO_1000127382" description="Large ribosomal subunit protein bL35">
    <location>
        <begin position="1"/>
        <end position="64"/>
    </location>
</feature>
<feature type="region of interest" description="Disordered" evidence="2">
    <location>
        <begin position="1"/>
        <end position="64"/>
    </location>
</feature>
<feature type="compositionally biased region" description="Basic residues" evidence="2">
    <location>
        <begin position="1"/>
        <end position="45"/>
    </location>
</feature>
<organism>
    <name type="scientific">Natranaerobius thermophilus (strain ATCC BAA-1301 / DSM 18059 / JW/NM-WN-LF)</name>
    <dbReference type="NCBI Taxonomy" id="457570"/>
    <lineage>
        <taxon>Bacteria</taxon>
        <taxon>Bacillati</taxon>
        <taxon>Bacillota</taxon>
        <taxon>Clostridia</taxon>
        <taxon>Natranaerobiales</taxon>
        <taxon>Natranaerobiaceae</taxon>
        <taxon>Natranaerobius</taxon>
    </lineage>
</organism>